<reference key="1">
    <citation type="journal article" date="2009" name="PLoS Genet.">
        <title>The complete genome and proteome of Laribacter hongkongensis reveal potential mechanisms for adaptations to different temperatures and habitats.</title>
        <authorList>
            <person name="Woo P.C.Y."/>
            <person name="Lau S.K.P."/>
            <person name="Tse H."/>
            <person name="Teng J.L.L."/>
            <person name="Curreem S.O."/>
            <person name="Tsang A.K.L."/>
            <person name="Fan R.Y.Y."/>
            <person name="Wong G.K.M."/>
            <person name="Huang Y."/>
            <person name="Loman N.J."/>
            <person name="Snyder L.A.S."/>
            <person name="Cai J.J."/>
            <person name="Huang J.-D."/>
            <person name="Mak W."/>
            <person name="Pallen M.J."/>
            <person name="Lok S."/>
            <person name="Yuen K.-Y."/>
        </authorList>
    </citation>
    <scope>NUCLEOTIDE SEQUENCE [LARGE SCALE GENOMIC DNA]</scope>
    <source>
        <strain>HLHK9</strain>
    </source>
</reference>
<proteinExistence type="inferred from homology"/>
<protein>
    <recommendedName>
        <fullName evidence="1">UPF0434 protein LHK_01103</fullName>
    </recommendedName>
</protein>
<organism>
    <name type="scientific">Laribacter hongkongensis (strain HLHK9)</name>
    <dbReference type="NCBI Taxonomy" id="557598"/>
    <lineage>
        <taxon>Bacteria</taxon>
        <taxon>Pseudomonadati</taxon>
        <taxon>Pseudomonadota</taxon>
        <taxon>Betaproteobacteria</taxon>
        <taxon>Neisseriales</taxon>
        <taxon>Aquaspirillaceae</taxon>
        <taxon>Laribacter</taxon>
    </lineage>
</organism>
<gene>
    <name type="ordered locus">LHK_01103</name>
</gene>
<feature type="chain" id="PRO_1000164485" description="UPF0434 protein LHK_01103">
    <location>
        <begin position="1"/>
        <end position="59"/>
    </location>
</feature>
<name>Y1103_LARHH</name>
<comment type="similarity">
    <text evidence="1">Belongs to the UPF0434 family.</text>
</comment>
<keyword id="KW-1185">Reference proteome</keyword>
<accession>C1D6I8</accession>
<sequence>MDAKLLEILVCPICKGPLVYKKEAGELVCKGDRLAFPVRDDIPVMLESDARELAADEDA</sequence>
<evidence type="ECO:0000255" key="1">
    <source>
        <dbReference type="HAMAP-Rule" id="MF_01187"/>
    </source>
</evidence>
<dbReference type="EMBL" id="CP001154">
    <property type="protein sequence ID" value="ACO74095.1"/>
    <property type="molecule type" value="Genomic_DNA"/>
</dbReference>
<dbReference type="RefSeq" id="WP_012696585.1">
    <property type="nucleotide sequence ID" value="NC_012559.1"/>
</dbReference>
<dbReference type="SMR" id="C1D6I8"/>
<dbReference type="STRING" id="557598.LHK_01103"/>
<dbReference type="KEGG" id="lhk:LHK_01103"/>
<dbReference type="eggNOG" id="COG2835">
    <property type="taxonomic scope" value="Bacteria"/>
</dbReference>
<dbReference type="HOGENOM" id="CLU_155659_3_1_4"/>
<dbReference type="Proteomes" id="UP000002010">
    <property type="component" value="Chromosome"/>
</dbReference>
<dbReference type="GO" id="GO:0005829">
    <property type="term" value="C:cytosol"/>
    <property type="evidence" value="ECO:0007669"/>
    <property type="project" value="TreeGrafter"/>
</dbReference>
<dbReference type="FunFam" id="2.20.25.10:FF:000002">
    <property type="entry name" value="UPF0434 protein YcaR"/>
    <property type="match status" value="1"/>
</dbReference>
<dbReference type="Gene3D" id="2.20.25.10">
    <property type="match status" value="1"/>
</dbReference>
<dbReference type="HAMAP" id="MF_01187">
    <property type="entry name" value="UPF0434"/>
    <property type="match status" value="1"/>
</dbReference>
<dbReference type="InterPro" id="IPR005651">
    <property type="entry name" value="Trm112-like"/>
</dbReference>
<dbReference type="PANTHER" id="PTHR33505:SF4">
    <property type="entry name" value="PROTEIN PREY, MITOCHONDRIAL"/>
    <property type="match status" value="1"/>
</dbReference>
<dbReference type="PANTHER" id="PTHR33505">
    <property type="entry name" value="ZGC:162634"/>
    <property type="match status" value="1"/>
</dbReference>
<dbReference type="Pfam" id="PF03966">
    <property type="entry name" value="Trm112p"/>
    <property type="match status" value="1"/>
</dbReference>
<dbReference type="SUPFAM" id="SSF158997">
    <property type="entry name" value="Trm112p-like"/>
    <property type="match status" value="1"/>
</dbReference>